<dbReference type="EMBL" id="CU928162">
    <property type="protein sequence ID" value="CAR07452.1"/>
    <property type="molecule type" value="Genomic_DNA"/>
</dbReference>
<dbReference type="RefSeq" id="WP_000587933.1">
    <property type="nucleotide sequence ID" value="NC_011745.1"/>
</dbReference>
<dbReference type="SMR" id="B7MTN8"/>
<dbReference type="ESTHER" id="ecoli-ycfp">
    <property type="family name" value="abh_upf00227"/>
</dbReference>
<dbReference type="GeneID" id="93776300"/>
<dbReference type="KEGG" id="ecq:ECED1_1251"/>
<dbReference type="HOGENOM" id="CLU_128769_0_0_6"/>
<dbReference type="Proteomes" id="UP000000748">
    <property type="component" value="Chromosome"/>
</dbReference>
<dbReference type="FunFam" id="3.40.50.1820:FF:000007">
    <property type="entry name" value="UPF0227 protein YcfP"/>
    <property type="match status" value="1"/>
</dbReference>
<dbReference type="Gene3D" id="3.40.50.1820">
    <property type="entry name" value="alpha/beta hydrolase"/>
    <property type="match status" value="1"/>
</dbReference>
<dbReference type="HAMAP" id="MF_01047">
    <property type="entry name" value="UPF0227"/>
    <property type="match status" value="1"/>
</dbReference>
<dbReference type="InterPro" id="IPR029058">
    <property type="entry name" value="AB_hydrolase_fold"/>
</dbReference>
<dbReference type="InterPro" id="IPR022987">
    <property type="entry name" value="UPF0227"/>
</dbReference>
<dbReference type="InterPro" id="IPR008886">
    <property type="entry name" value="UPF0227/Esterase_YqiA"/>
</dbReference>
<dbReference type="NCBIfam" id="NF003431">
    <property type="entry name" value="PRK04940.1"/>
    <property type="match status" value="1"/>
</dbReference>
<dbReference type="PANTHER" id="PTHR35602">
    <property type="entry name" value="ESTERASE YQIA-RELATED"/>
    <property type="match status" value="1"/>
</dbReference>
<dbReference type="PANTHER" id="PTHR35602:SF2">
    <property type="entry name" value="UPF0227 PROTEIN YCFP"/>
    <property type="match status" value="1"/>
</dbReference>
<dbReference type="Pfam" id="PF05728">
    <property type="entry name" value="UPF0227"/>
    <property type="match status" value="1"/>
</dbReference>
<dbReference type="SUPFAM" id="SSF53474">
    <property type="entry name" value="alpha/beta-Hydrolases"/>
    <property type="match status" value="1"/>
</dbReference>
<name>YCFP_ECO81</name>
<proteinExistence type="inferred from homology"/>
<gene>
    <name evidence="1" type="primary">ycfP</name>
    <name type="ordered locus">ECED1_1251</name>
</gene>
<comment type="similarity">
    <text evidence="1">Belongs to the UPF0227 family.</text>
</comment>
<reference key="1">
    <citation type="journal article" date="2009" name="PLoS Genet.">
        <title>Organised genome dynamics in the Escherichia coli species results in highly diverse adaptive paths.</title>
        <authorList>
            <person name="Touchon M."/>
            <person name="Hoede C."/>
            <person name="Tenaillon O."/>
            <person name="Barbe V."/>
            <person name="Baeriswyl S."/>
            <person name="Bidet P."/>
            <person name="Bingen E."/>
            <person name="Bonacorsi S."/>
            <person name="Bouchier C."/>
            <person name="Bouvet O."/>
            <person name="Calteau A."/>
            <person name="Chiapello H."/>
            <person name="Clermont O."/>
            <person name="Cruveiller S."/>
            <person name="Danchin A."/>
            <person name="Diard M."/>
            <person name="Dossat C."/>
            <person name="Karoui M.E."/>
            <person name="Frapy E."/>
            <person name="Garry L."/>
            <person name="Ghigo J.M."/>
            <person name="Gilles A.M."/>
            <person name="Johnson J."/>
            <person name="Le Bouguenec C."/>
            <person name="Lescat M."/>
            <person name="Mangenot S."/>
            <person name="Martinez-Jehanne V."/>
            <person name="Matic I."/>
            <person name="Nassif X."/>
            <person name="Oztas S."/>
            <person name="Petit M.A."/>
            <person name="Pichon C."/>
            <person name="Rouy Z."/>
            <person name="Ruf C.S."/>
            <person name="Schneider D."/>
            <person name="Tourret J."/>
            <person name="Vacherie B."/>
            <person name="Vallenet D."/>
            <person name="Medigue C."/>
            <person name="Rocha E.P.C."/>
            <person name="Denamur E."/>
        </authorList>
    </citation>
    <scope>NUCLEOTIDE SEQUENCE [LARGE SCALE GENOMIC DNA]</scope>
    <source>
        <strain>ED1a</strain>
    </source>
</reference>
<accession>B7MTN8</accession>
<evidence type="ECO:0000255" key="1">
    <source>
        <dbReference type="HAMAP-Rule" id="MF_01047"/>
    </source>
</evidence>
<protein>
    <recommendedName>
        <fullName evidence="1">UPF0227 protein YcfP</fullName>
    </recommendedName>
</protein>
<organism>
    <name type="scientific">Escherichia coli O81 (strain ED1a)</name>
    <dbReference type="NCBI Taxonomy" id="585397"/>
    <lineage>
        <taxon>Bacteria</taxon>
        <taxon>Pseudomonadati</taxon>
        <taxon>Pseudomonadota</taxon>
        <taxon>Gammaproteobacteria</taxon>
        <taxon>Enterobacterales</taxon>
        <taxon>Enterobacteriaceae</taxon>
        <taxon>Escherichia</taxon>
    </lineage>
</organism>
<sequence>MIIYLHGFDSNSPGNHEKVLQLQFIDPDVRLISYSTRHPKHDMQHLLKEVDKMLQLNVDERPLICGVGLGGYWAERIGFLCDIRQVIFNPNLFPYENMEGKIDRPEEYADIATKCVTNFREKNRDRCLVILSRNDEALNSQRTSEELHHYYEIVWDEEQTHKFKNISPHLQRIKAFKTLG</sequence>
<feature type="chain" id="PRO_1000149607" description="UPF0227 protein YcfP">
    <location>
        <begin position="1"/>
        <end position="180"/>
    </location>
</feature>